<organism>
    <name type="scientific">Streptomyces coelicolor (strain ATCC BAA-471 / A3(2) / M145)</name>
    <dbReference type="NCBI Taxonomy" id="100226"/>
    <lineage>
        <taxon>Bacteria</taxon>
        <taxon>Bacillati</taxon>
        <taxon>Actinomycetota</taxon>
        <taxon>Actinomycetes</taxon>
        <taxon>Kitasatosporales</taxon>
        <taxon>Streptomycetaceae</taxon>
        <taxon>Streptomyces</taxon>
        <taxon>Streptomyces albidoflavus group</taxon>
    </lineage>
</organism>
<gene>
    <name type="primary">hisF</name>
    <name type="ordered locus">SCO2048</name>
    <name type="ORF">SC4G6.17c</name>
</gene>
<accession>Q9S2T7</accession>
<reference key="1">
    <citation type="journal article" date="2002" name="Nature">
        <title>Complete genome sequence of the model actinomycete Streptomyces coelicolor A3(2).</title>
        <authorList>
            <person name="Bentley S.D."/>
            <person name="Chater K.F."/>
            <person name="Cerdeno-Tarraga A.-M."/>
            <person name="Challis G.L."/>
            <person name="Thomson N.R."/>
            <person name="James K.D."/>
            <person name="Harris D.E."/>
            <person name="Quail M.A."/>
            <person name="Kieser H."/>
            <person name="Harper D."/>
            <person name="Bateman A."/>
            <person name="Brown S."/>
            <person name="Chandra G."/>
            <person name="Chen C.W."/>
            <person name="Collins M."/>
            <person name="Cronin A."/>
            <person name="Fraser A."/>
            <person name="Goble A."/>
            <person name="Hidalgo J."/>
            <person name="Hornsby T."/>
            <person name="Howarth S."/>
            <person name="Huang C.-H."/>
            <person name="Kieser T."/>
            <person name="Larke L."/>
            <person name="Murphy L.D."/>
            <person name="Oliver K."/>
            <person name="O'Neil S."/>
            <person name="Rabbinowitsch E."/>
            <person name="Rajandream M.A."/>
            <person name="Rutherford K.M."/>
            <person name="Rutter S."/>
            <person name="Seeger K."/>
            <person name="Saunders D."/>
            <person name="Sharp S."/>
            <person name="Squares R."/>
            <person name="Squares S."/>
            <person name="Taylor K."/>
            <person name="Warren T."/>
            <person name="Wietzorrek A."/>
            <person name="Woodward J.R."/>
            <person name="Barrell B.G."/>
            <person name="Parkhill J."/>
            <person name="Hopwood D.A."/>
        </authorList>
    </citation>
    <scope>NUCLEOTIDE SEQUENCE [LARGE SCALE GENOMIC DNA]</scope>
    <source>
        <strain>ATCC BAA-471 / A3(2) / M145</strain>
    </source>
</reference>
<dbReference type="EC" id="4.3.2.10"/>
<dbReference type="EMBL" id="AL939111">
    <property type="protein sequence ID" value="CAB51440.1"/>
    <property type="molecule type" value="Genomic_DNA"/>
</dbReference>
<dbReference type="PIR" id="T35077">
    <property type="entry name" value="T35077"/>
</dbReference>
<dbReference type="RefSeq" id="NP_626308.1">
    <property type="nucleotide sequence ID" value="NC_003888.3"/>
</dbReference>
<dbReference type="RefSeq" id="WP_003976768.1">
    <property type="nucleotide sequence ID" value="NZ_VNID01000001.1"/>
</dbReference>
<dbReference type="SMR" id="Q9S2T7"/>
<dbReference type="FunCoup" id="Q9S2T7">
    <property type="interactions" value="388"/>
</dbReference>
<dbReference type="STRING" id="100226.gene:17759646"/>
<dbReference type="PaxDb" id="100226-SCO2048"/>
<dbReference type="GeneID" id="91386959"/>
<dbReference type="KEGG" id="sco:SCO2048"/>
<dbReference type="PATRIC" id="fig|100226.15.peg.2079"/>
<dbReference type="eggNOG" id="COG0107">
    <property type="taxonomic scope" value="Bacteria"/>
</dbReference>
<dbReference type="HOGENOM" id="CLU_048577_4_0_11"/>
<dbReference type="InParanoid" id="Q9S2T7"/>
<dbReference type="OrthoDB" id="9781903at2"/>
<dbReference type="PhylomeDB" id="Q9S2T7"/>
<dbReference type="UniPathway" id="UPA00031">
    <property type="reaction ID" value="UER00010"/>
</dbReference>
<dbReference type="Proteomes" id="UP000001973">
    <property type="component" value="Chromosome"/>
</dbReference>
<dbReference type="GO" id="GO:0005737">
    <property type="term" value="C:cytoplasm"/>
    <property type="evidence" value="ECO:0007669"/>
    <property type="project" value="UniProtKB-SubCell"/>
</dbReference>
<dbReference type="GO" id="GO:0000107">
    <property type="term" value="F:imidazoleglycerol-phosphate synthase activity"/>
    <property type="evidence" value="ECO:0000318"/>
    <property type="project" value="GO_Central"/>
</dbReference>
<dbReference type="GO" id="GO:0016829">
    <property type="term" value="F:lyase activity"/>
    <property type="evidence" value="ECO:0007669"/>
    <property type="project" value="UniProtKB-KW"/>
</dbReference>
<dbReference type="GO" id="GO:0000105">
    <property type="term" value="P:L-histidine biosynthetic process"/>
    <property type="evidence" value="ECO:0007669"/>
    <property type="project" value="UniProtKB-UniRule"/>
</dbReference>
<dbReference type="CDD" id="cd04731">
    <property type="entry name" value="HisF"/>
    <property type="match status" value="1"/>
</dbReference>
<dbReference type="FunFam" id="3.20.20.70:FF:000006">
    <property type="entry name" value="Imidazole glycerol phosphate synthase subunit HisF"/>
    <property type="match status" value="1"/>
</dbReference>
<dbReference type="Gene3D" id="3.20.20.70">
    <property type="entry name" value="Aldolase class I"/>
    <property type="match status" value="1"/>
</dbReference>
<dbReference type="HAMAP" id="MF_01013">
    <property type="entry name" value="HisF"/>
    <property type="match status" value="1"/>
</dbReference>
<dbReference type="InterPro" id="IPR013785">
    <property type="entry name" value="Aldolase_TIM"/>
</dbReference>
<dbReference type="InterPro" id="IPR006062">
    <property type="entry name" value="His_biosynth"/>
</dbReference>
<dbReference type="InterPro" id="IPR004651">
    <property type="entry name" value="HisF"/>
</dbReference>
<dbReference type="InterPro" id="IPR050064">
    <property type="entry name" value="IGPS_HisA/HisF"/>
</dbReference>
<dbReference type="InterPro" id="IPR011060">
    <property type="entry name" value="RibuloseP-bd_barrel"/>
</dbReference>
<dbReference type="NCBIfam" id="TIGR00735">
    <property type="entry name" value="hisF"/>
    <property type="match status" value="1"/>
</dbReference>
<dbReference type="PANTHER" id="PTHR21235:SF2">
    <property type="entry name" value="IMIDAZOLE GLYCEROL PHOSPHATE SYNTHASE HISHF"/>
    <property type="match status" value="1"/>
</dbReference>
<dbReference type="PANTHER" id="PTHR21235">
    <property type="entry name" value="IMIDAZOLE GLYCEROL PHOSPHATE SYNTHASE SUBUNIT HISF/H IGP SYNTHASE SUBUNIT HISF/H"/>
    <property type="match status" value="1"/>
</dbReference>
<dbReference type="Pfam" id="PF00977">
    <property type="entry name" value="His_biosynth"/>
    <property type="match status" value="1"/>
</dbReference>
<dbReference type="SUPFAM" id="SSF51366">
    <property type="entry name" value="Ribulose-phoshate binding barrel"/>
    <property type="match status" value="1"/>
</dbReference>
<proteinExistence type="inferred from homology"/>
<comment type="function">
    <text evidence="1">IGPS catalyzes the conversion of PRFAR and glutamine to IGP, AICAR and glutamate. The HisF subunit catalyzes the cyclization activity that produces IGP and AICAR from PRFAR using the ammonia provided by the HisH subunit (By similarity).</text>
</comment>
<comment type="catalytic activity">
    <reaction>
        <text>5-[(5-phospho-1-deoxy-D-ribulos-1-ylimino)methylamino]-1-(5-phospho-beta-D-ribosyl)imidazole-4-carboxamide + L-glutamine = D-erythro-1-(imidazol-4-yl)glycerol 3-phosphate + 5-amino-1-(5-phospho-beta-D-ribosyl)imidazole-4-carboxamide + L-glutamate + H(+)</text>
        <dbReference type="Rhea" id="RHEA:24793"/>
        <dbReference type="ChEBI" id="CHEBI:15378"/>
        <dbReference type="ChEBI" id="CHEBI:29985"/>
        <dbReference type="ChEBI" id="CHEBI:58278"/>
        <dbReference type="ChEBI" id="CHEBI:58359"/>
        <dbReference type="ChEBI" id="CHEBI:58475"/>
        <dbReference type="ChEBI" id="CHEBI:58525"/>
        <dbReference type="EC" id="4.3.2.10"/>
    </reaction>
</comment>
<comment type="pathway">
    <text>Amino-acid biosynthesis; L-histidine biosynthesis; L-histidine from 5-phospho-alpha-D-ribose 1-diphosphate: step 5/9.</text>
</comment>
<comment type="subunit">
    <text evidence="1">Heterodimer of HisH and HisF.</text>
</comment>
<comment type="subcellular location">
    <subcellularLocation>
        <location evidence="1">Cytoplasm</location>
    </subcellularLocation>
</comment>
<comment type="similarity">
    <text evidence="3">Belongs to the HisA/HisF family.</text>
</comment>
<name>HIS6_STRCO</name>
<sequence length="251" mass="26557">MTLAVRVIPCLDVDNGRVVKGVNFQNLRDAGDPVEMAKVYDAEGADELTFLDITASSGNRETTYDVVRRTAEQVFIPLTVGGGVRTAEDVDKLLRAGADKVGVNTAAIARPDLIREIAERFGRQVLVLSVDARRTEAGTFEVTTHGGRRGTGIDAVEWAHRAAELGAGEILLNSMDADGTKDGYDLEMLAAVRKHVSVPVIASGGAGSLAHFAPAVEAGADAVLAASVFHFGDLRIGEVKTTLREAGHPVR</sequence>
<feature type="chain" id="PRO_0000142243" description="Imidazole glycerol phosphate synthase subunit HisF">
    <location>
        <begin position="1"/>
        <end position="251"/>
    </location>
</feature>
<feature type="active site" evidence="2">
    <location>
        <position position="12"/>
    </location>
</feature>
<feature type="active site" evidence="2">
    <location>
        <position position="131"/>
    </location>
</feature>
<evidence type="ECO:0000250" key="1"/>
<evidence type="ECO:0000255" key="2"/>
<evidence type="ECO:0000305" key="3"/>
<keyword id="KW-0028">Amino-acid biosynthesis</keyword>
<keyword id="KW-0963">Cytoplasm</keyword>
<keyword id="KW-0368">Histidine biosynthesis</keyword>
<keyword id="KW-0456">Lyase</keyword>
<keyword id="KW-1185">Reference proteome</keyword>
<protein>
    <recommendedName>
        <fullName>Imidazole glycerol phosphate synthase subunit HisF</fullName>
        <ecNumber>4.3.2.10</ecNumber>
    </recommendedName>
    <alternativeName>
        <fullName>IGP synthase cyclase subunit</fullName>
    </alternativeName>
    <alternativeName>
        <fullName>IGP synthase subunit HisF</fullName>
    </alternativeName>
    <alternativeName>
        <fullName>ImGP synthase subunit HisF</fullName>
        <shortName>IGPS subunit HisF</shortName>
    </alternativeName>
</protein>